<feature type="signal peptide" evidence="2">
    <location>
        <begin position="1"/>
        <end position="22"/>
    </location>
</feature>
<feature type="chain" id="PRO_0000356891" description="Venom protein HGE029">
    <location>
        <begin position="23"/>
        <end position="80"/>
    </location>
</feature>
<proteinExistence type="inferred from homology"/>
<organism>
    <name type="scientific">Hoffmannihadrurus gertschi</name>
    <name type="common">Scorpion</name>
    <name type="synonym">Hadrurus gertschi</name>
    <dbReference type="NCBI Taxonomy" id="380989"/>
    <lineage>
        <taxon>Eukaryota</taxon>
        <taxon>Metazoa</taxon>
        <taxon>Ecdysozoa</taxon>
        <taxon>Arthropoda</taxon>
        <taxon>Chelicerata</taxon>
        <taxon>Arachnida</taxon>
        <taxon>Scorpiones</taxon>
        <taxon>Iurida</taxon>
        <taxon>Iuroidea</taxon>
        <taxon>Hadrurus</taxon>
    </lineage>
</organism>
<name>NDB2_HOFGE</name>
<reference key="1">
    <citation type="journal article" date="2007" name="BMC Genomics">
        <title>Transcriptome analysis of the venom gland of the Mexican scorpion Hadrurus gertschi (Arachnida: Scorpiones).</title>
        <authorList>
            <person name="Schwartz E.F."/>
            <person name="Diego-Garcia E."/>
            <person name="Rodriguez de la Vega R.C."/>
            <person name="Possani L.D."/>
        </authorList>
    </citation>
    <scope>NUCLEOTIDE SEQUENCE [LARGE SCALE MRNA]</scope>
    <scope>NOMENCLATURE</scope>
    <source>
        <tissue>Venom gland</tissue>
    </source>
</reference>
<keyword id="KW-0964">Secreted</keyword>
<keyword id="KW-0732">Signal</keyword>
<evidence type="ECO:0000250" key="1"/>
<evidence type="ECO:0000255" key="2"/>
<evidence type="ECO:0000303" key="3">
    <source>
    </source>
</evidence>
<evidence type="ECO:0000305" key="4"/>
<sequence length="80" mass="8972">MNAKAFLAIFMIALLITDRAEAGWWNAFKSIGKKLLKSKLAKDITKMAKQRAKEYVVKKLNGPPEEEVAAIDALMNSLDY</sequence>
<comment type="subcellular location">
    <subcellularLocation>
        <location evidence="1">Secreted</location>
    </subcellularLocation>
</comment>
<comment type="tissue specificity">
    <text evidence="4">Expressed by the venom gland.</text>
</comment>
<comment type="similarity">
    <text evidence="4">Belongs to the non-disulfide-bridged peptide (NDBP) superfamily. Long chain multifunctional peptide (group 2) family.</text>
</comment>
<accession>P0C8L3</accession>
<protein>
    <recommendedName>
        <fullName>Venom protein HGE029</fullName>
    </recommendedName>
    <alternativeName>
        <fullName evidence="3">Non-disulfide-bridged peptide 3.7</fullName>
        <shortName evidence="3">NDBP-3.7</shortName>
    </alternativeName>
</protein>
<dbReference type="EMBL" id="EL698903">
    <property type="status" value="NOT_ANNOTATED_CDS"/>
    <property type="molecule type" value="mRNA"/>
</dbReference>
<dbReference type="SMR" id="P0C8L3"/>
<dbReference type="TCDB" id="1.C.17.2.2">
    <property type="family name" value="the cecropin (cecropin) family"/>
</dbReference>
<dbReference type="GO" id="GO:0005576">
    <property type="term" value="C:extracellular region"/>
    <property type="evidence" value="ECO:0007669"/>
    <property type="project" value="UniProtKB-SubCell"/>
</dbReference>